<protein>
    <recommendedName>
        <fullName evidence="1">Large ribosomal subunit protein bL19</fullName>
    </recommendedName>
    <alternativeName>
        <fullName evidence="2">50S ribosomal protein L19</fullName>
    </alternativeName>
</protein>
<gene>
    <name evidence="1" type="primary">rplS</name>
    <name type="ordered locus">WD_1021</name>
</gene>
<dbReference type="EMBL" id="AE017196">
    <property type="protein sequence ID" value="AAS14680.1"/>
    <property type="molecule type" value="Genomic_DNA"/>
</dbReference>
<dbReference type="RefSeq" id="WP_006279489.1">
    <property type="nucleotide sequence ID" value="NZ_OX384529.1"/>
</dbReference>
<dbReference type="SMR" id="Q73GD6"/>
<dbReference type="EnsemblBacteria" id="AAS14680">
    <property type="protein sequence ID" value="AAS14680"/>
    <property type="gene ID" value="WD_1021"/>
</dbReference>
<dbReference type="GeneID" id="70036500"/>
<dbReference type="KEGG" id="wol:WD_1021"/>
<dbReference type="eggNOG" id="COG0335">
    <property type="taxonomic scope" value="Bacteria"/>
</dbReference>
<dbReference type="Proteomes" id="UP000008215">
    <property type="component" value="Chromosome"/>
</dbReference>
<dbReference type="GO" id="GO:0022625">
    <property type="term" value="C:cytosolic large ribosomal subunit"/>
    <property type="evidence" value="ECO:0007669"/>
    <property type="project" value="TreeGrafter"/>
</dbReference>
<dbReference type="GO" id="GO:0003735">
    <property type="term" value="F:structural constituent of ribosome"/>
    <property type="evidence" value="ECO:0007669"/>
    <property type="project" value="InterPro"/>
</dbReference>
<dbReference type="GO" id="GO:0006412">
    <property type="term" value="P:translation"/>
    <property type="evidence" value="ECO:0007669"/>
    <property type="project" value="UniProtKB-UniRule"/>
</dbReference>
<dbReference type="Gene3D" id="2.30.30.790">
    <property type="match status" value="1"/>
</dbReference>
<dbReference type="HAMAP" id="MF_00402">
    <property type="entry name" value="Ribosomal_bL19"/>
    <property type="match status" value="1"/>
</dbReference>
<dbReference type="InterPro" id="IPR001857">
    <property type="entry name" value="Ribosomal_bL19"/>
</dbReference>
<dbReference type="InterPro" id="IPR038657">
    <property type="entry name" value="Ribosomal_bL19_sf"/>
</dbReference>
<dbReference type="InterPro" id="IPR008991">
    <property type="entry name" value="Translation_prot_SH3-like_sf"/>
</dbReference>
<dbReference type="NCBIfam" id="TIGR01024">
    <property type="entry name" value="rplS_bact"/>
    <property type="match status" value="1"/>
</dbReference>
<dbReference type="PANTHER" id="PTHR15680:SF9">
    <property type="entry name" value="LARGE RIBOSOMAL SUBUNIT PROTEIN BL19M"/>
    <property type="match status" value="1"/>
</dbReference>
<dbReference type="PANTHER" id="PTHR15680">
    <property type="entry name" value="RIBOSOMAL PROTEIN L19"/>
    <property type="match status" value="1"/>
</dbReference>
<dbReference type="Pfam" id="PF01245">
    <property type="entry name" value="Ribosomal_L19"/>
    <property type="match status" value="1"/>
</dbReference>
<dbReference type="PIRSF" id="PIRSF002191">
    <property type="entry name" value="Ribosomal_L19"/>
    <property type="match status" value="1"/>
</dbReference>
<dbReference type="PRINTS" id="PR00061">
    <property type="entry name" value="RIBOSOMALL19"/>
</dbReference>
<dbReference type="SUPFAM" id="SSF50104">
    <property type="entry name" value="Translation proteins SH3-like domain"/>
    <property type="match status" value="1"/>
</dbReference>
<keyword id="KW-0687">Ribonucleoprotein</keyword>
<keyword id="KW-0689">Ribosomal protein</keyword>
<accession>Q73GD6</accession>
<feature type="chain" id="PRO_0000163570" description="Large ribosomal subunit protein bL19">
    <location>
        <begin position="1"/>
        <end position="125"/>
    </location>
</feature>
<comment type="function">
    <text evidence="1">This protein is located at the 30S-50S ribosomal subunit interface and may play a role in the structure and function of the aminoacyl-tRNA binding site.</text>
</comment>
<comment type="similarity">
    <text evidence="1">Belongs to the bacterial ribosomal protein bL19 family.</text>
</comment>
<reference key="1">
    <citation type="journal article" date="2004" name="PLoS Biol.">
        <title>Phylogenomics of the reproductive parasite Wolbachia pipientis wMel: a streamlined genome overrun by mobile genetic elements.</title>
        <authorList>
            <person name="Wu M."/>
            <person name="Sun L.V."/>
            <person name="Vamathevan J.J."/>
            <person name="Riegler M."/>
            <person name="DeBoy R.T."/>
            <person name="Brownlie J.C."/>
            <person name="McGraw E.A."/>
            <person name="Martin W."/>
            <person name="Esser C."/>
            <person name="Ahmadinejad N."/>
            <person name="Wiegand C."/>
            <person name="Madupu R."/>
            <person name="Beanan M.J."/>
            <person name="Brinkac L.M."/>
            <person name="Daugherty S.C."/>
            <person name="Durkin A.S."/>
            <person name="Kolonay J.F."/>
            <person name="Nelson W.C."/>
            <person name="Mohamoud Y."/>
            <person name="Lee P."/>
            <person name="Berry K.J."/>
            <person name="Young M.B."/>
            <person name="Utterback T.R."/>
            <person name="Weidman J.F."/>
            <person name="Nierman W.C."/>
            <person name="Paulsen I.T."/>
            <person name="Nelson K.E."/>
            <person name="Tettelin H."/>
            <person name="O'Neill S.L."/>
            <person name="Eisen J.A."/>
        </authorList>
    </citation>
    <scope>NUCLEOTIDE SEQUENCE [LARGE SCALE GENOMIC DNA]</scope>
</reference>
<evidence type="ECO:0000255" key="1">
    <source>
        <dbReference type="HAMAP-Rule" id="MF_00402"/>
    </source>
</evidence>
<evidence type="ECO:0000305" key="2"/>
<proteinExistence type="inferred from homology"/>
<name>RL19_WOLPM</name>
<sequence length="125" mass="14372">MTNLLKKFNEQQMQVLAKEIPEFRPGDDLKVTFKVVDGTSERIQIFEGVCISKRNRGLHSSFAVRKVSHGESIVSQFFVYSPALVSVQVTRKGKVRRAKLYYLCKLFGKAARIKERTTYVKKKSK</sequence>
<organism>
    <name type="scientific">Wolbachia pipientis wMel</name>
    <dbReference type="NCBI Taxonomy" id="163164"/>
    <lineage>
        <taxon>Bacteria</taxon>
        <taxon>Pseudomonadati</taxon>
        <taxon>Pseudomonadota</taxon>
        <taxon>Alphaproteobacteria</taxon>
        <taxon>Rickettsiales</taxon>
        <taxon>Anaplasmataceae</taxon>
        <taxon>Wolbachieae</taxon>
        <taxon>Wolbachia</taxon>
    </lineage>
</organism>